<name>PETN_PROMM</name>
<evidence type="ECO:0000255" key="1">
    <source>
        <dbReference type="HAMAP-Rule" id="MF_00395"/>
    </source>
</evidence>
<organism>
    <name type="scientific">Prochlorococcus marinus (strain MIT 9313)</name>
    <dbReference type="NCBI Taxonomy" id="74547"/>
    <lineage>
        <taxon>Bacteria</taxon>
        <taxon>Bacillati</taxon>
        <taxon>Cyanobacteriota</taxon>
        <taxon>Cyanophyceae</taxon>
        <taxon>Synechococcales</taxon>
        <taxon>Prochlorococcaceae</taxon>
        <taxon>Prochlorococcus</taxon>
    </lineage>
</organism>
<comment type="function">
    <text evidence="1">Component of the cytochrome b6-f complex, which mediates electron transfer between photosystem II (PSII) and photosystem I (PSI), cyclic electron flow around PSI, and state transitions.</text>
</comment>
<comment type="subunit">
    <text evidence="1">The 4 large subunits of the cytochrome b6-f complex are cytochrome b6, subunit IV (17 kDa polypeptide, PetD), cytochrome f and the Rieske protein, while the 4 small subunits are PetG, PetL, PetM and PetN. The complex functions as a dimer.</text>
</comment>
<comment type="subcellular location">
    <subcellularLocation>
        <location evidence="1">Cellular thylakoid membrane</location>
        <topology evidence="1">Single-pass membrane protein</topology>
    </subcellularLocation>
</comment>
<comment type="similarity">
    <text evidence="1">Belongs to the PetN family.</text>
</comment>
<gene>
    <name evidence="1" type="primary">petN</name>
    <name type="ordered locus">PMT_0673</name>
</gene>
<dbReference type="EMBL" id="BX548175">
    <property type="protein sequence ID" value="CAE20848.1"/>
    <property type="molecule type" value="Genomic_DNA"/>
</dbReference>
<dbReference type="RefSeq" id="WP_006041398.1">
    <property type="nucleotide sequence ID" value="NC_005071.1"/>
</dbReference>
<dbReference type="SMR" id="Q7V7R5"/>
<dbReference type="KEGG" id="pmt:PMT_0673"/>
<dbReference type="HOGENOM" id="CLU_215774_0_0_3"/>
<dbReference type="OrthoDB" id="560308at2"/>
<dbReference type="Proteomes" id="UP000001423">
    <property type="component" value="Chromosome"/>
</dbReference>
<dbReference type="GO" id="GO:0009512">
    <property type="term" value="C:cytochrome b6f complex"/>
    <property type="evidence" value="ECO:0007669"/>
    <property type="project" value="InterPro"/>
</dbReference>
<dbReference type="GO" id="GO:0031676">
    <property type="term" value="C:plasma membrane-derived thylakoid membrane"/>
    <property type="evidence" value="ECO:0007669"/>
    <property type="project" value="UniProtKB-SubCell"/>
</dbReference>
<dbReference type="GO" id="GO:0045158">
    <property type="term" value="F:electron transporter, transferring electrons within cytochrome b6/f complex of photosystem II activity"/>
    <property type="evidence" value="ECO:0007669"/>
    <property type="project" value="InterPro"/>
</dbReference>
<dbReference type="GO" id="GO:0017004">
    <property type="term" value="P:cytochrome complex assembly"/>
    <property type="evidence" value="ECO:0007669"/>
    <property type="project" value="UniProtKB-UniRule"/>
</dbReference>
<dbReference type="GO" id="GO:0015979">
    <property type="term" value="P:photosynthesis"/>
    <property type="evidence" value="ECO:0007669"/>
    <property type="project" value="UniProtKB-KW"/>
</dbReference>
<dbReference type="HAMAP" id="MF_00395">
    <property type="entry name" value="Cytb6_f_PetN"/>
    <property type="match status" value="1"/>
</dbReference>
<dbReference type="InterPro" id="IPR036143">
    <property type="entry name" value="Cytochr_b6-f_cplx_su8_sf"/>
</dbReference>
<dbReference type="InterPro" id="IPR005497">
    <property type="entry name" value="Cytochrome_b6-f_cplx_su8"/>
</dbReference>
<dbReference type="NCBIfam" id="NF002709">
    <property type="entry name" value="PRK02529.1"/>
    <property type="match status" value="1"/>
</dbReference>
<dbReference type="Pfam" id="PF03742">
    <property type="entry name" value="PetN"/>
    <property type="match status" value="1"/>
</dbReference>
<dbReference type="SUPFAM" id="SSF103451">
    <property type="entry name" value="PetN subunit of the cytochrome b6f complex"/>
    <property type="match status" value="1"/>
</dbReference>
<sequence>MLFTLAWASLAAVFSFSIAMVVWGRNGDGTLNF</sequence>
<accession>Q7V7R5</accession>
<feature type="chain" id="PRO_0000217139" description="Cytochrome b6-f complex subunit 8">
    <location>
        <begin position="1"/>
        <end position="33"/>
    </location>
</feature>
<feature type="transmembrane region" description="Helical" evidence="1">
    <location>
        <begin position="2"/>
        <end position="22"/>
    </location>
</feature>
<reference key="1">
    <citation type="journal article" date="2003" name="Nature">
        <title>Genome divergence in two Prochlorococcus ecotypes reflects oceanic niche differentiation.</title>
        <authorList>
            <person name="Rocap G."/>
            <person name="Larimer F.W."/>
            <person name="Lamerdin J.E."/>
            <person name="Malfatti S."/>
            <person name="Chain P."/>
            <person name="Ahlgren N.A."/>
            <person name="Arellano A."/>
            <person name="Coleman M."/>
            <person name="Hauser L."/>
            <person name="Hess W.R."/>
            <person name="Johnson Z.I."/>
            <person name="Land M.L."/>
            <person name="Lindell D."/>
            <person name="Post A.F."/>
            <person name="Regala W."/>
            <person name="Shah M."/>
            <person name="Shaw S.L."/>
            <person name="Steglich C."/>
            <person name="Sullivan M.B."/>
            <person name="Ting C.S."/>
            <person name="Tolonen A."/>
            <person name="Webb E.A."/>
            <person name="Zinser E.R."/>
            <person name="Chisholm S.W."/>
        </authorList>
    </citation>
    <scope>NUCLEOTIDE SEQUENCE [LARGE SCALE GENOMIC DNA]</scope>
    <source>
        <strain>MIT 9313</strain>
    </source>
</reference>
<proteinExistence type="inferred from homology"/>
<protein>
    <recommendedName>
        <fullName evidence="1">Cytochrome b6-f complex subunit 8</fullName>
    </recommendedName>
    <alternativeName>
        <fullName evidence="1">Cytochrome b6-f complex subunit PetN</fullName>
    </alternativeName>
    <alternativeName>
        <fullName evidence="1">Cytochrome b6-f complex subunit VIII</fullName>
    </alternativeName>
</protein>
<keyword id="KW-0249">Electron transport</keyword>
<keyword id="KW-0472">Membrane</keyword>
<keyword id="KW-0602">Photosynthesis</keyword>
<keyword id="KW-1185">Reference proteome</keyword>
<keyword id="KW-0793">Thylakoid</keyword>
<keyword id="KW-0812">Transmembrane</keyword>
<keyword id="KW-1133">Transmembrane helix</keyword>
<keyword id="KW-0813">Transport</keyword>